<accession>Q8X5P4</accession>
<accession>Q7A901</accession>
<name>PHNN_ECO57</name>
<organism>
    <name type="scientific">Escherichia coli O157:H7</name>
    <dbReference type="NCBI Taxonomy" id="83334"/>
    <lineage>
        <taxon>Bacteria</taxon>
        <taxon>Pseudomonadati</taxon>
        <taxon>Pseudomonadota</taxon>
        <taxon>Gammaproteobacteria</taxon>
        <taxon>Enterobacterales</taxon>
        <taxon>Enterobacteriaceae</taxon>
        <taxon>Escherichia</taxon>
    </lineage>
</organism>
<proteinExistence type="inferred from homology"/>
<comment type="function">
    <text evidence="1">Catalyzes the phosphorylation of ribose 1,5-bisphosphate to 5-phospho-D-ribosyl alpha-1-diphosphate (PRPP).</text>
</comment>
<comment type="catalytic activity">
    <reaction evidence="1">
        <text>alpha-D-ribose 1,5-bisphosphate + ATP = 5-phospho-alpha-D-ribose 1-diphosphate + ADP</text>
        <dbReference type="Rhea" id="RHEA:20109"/>
        <dbReference type="ChEBI" id="CHEBI:30616"/>
        <dbReference type="ChEBI" id="CHEBI:58017"/>
        <dbReference type="ChEBI" id="CHEBI:68688"/>
        <dbReference type="ChEBI" id="CHEBI:456216"/>
        <dbReference type="EC" id="2.7.4.23"/>
    </reaction>
</comment>
<comment type="pathway">
    <text evidence="1">Metabolic intermediate biosynthesis; 5-phospho-alpha-D-ribose 1-diphosphate biosynthesis; 5-phospho-alpha-D-ribose 1-diphosphate from D-ribose 5-phosphate (route II): step 3/3.</text>
</comment>
<comment type="similarity">
    <text evidence="1">Belongs to the ribose 1,5-bisphosphokinase family.</text>
</comment>
<gene>
    <name evidence="1" type="primary">phnN</name>
    <name type="ordered locus">Z5697</name>
    <name type="ordered locus">ECs5077</name>
</gene>
<evidence type="ECO:0000255" key="1">
    <source>
        <dbReference type="HAMAP-Rule" id="MF_00836"/>
    </source>
</evidence>
<protein>
    <recommendedName>
        <fullName evidence="1">Ribose 1,5-bisphosphate phosphokinase PhnN</fullName>
        <ecNumber evidence="1">2.7.4.23</ecNumber>
    </recommendedName>
    <alternativeName>
        <fullName evidence="1">Ribose 1,5-bisphosphokinase</fullName>
    </alternativeName>
</protein>
<feature type="chain" id="PRO_0000412785" description="Ribose 1,5-bisphosphate phosphokinase PhnN">
    <location>
        <begin position="1"/>
        <end position="185"/>
    </location>
</feature>
<feature type="binding site" evidence="1">
    <location>
        <begin position="10"/>
        <end position="17"/>
    </location>
    <ligand>
        <name>ATP</name>
        <dbReference type="ChEBI" id="CHEBI:30616"/>
    </ligand>
</feature>
<sequence length="185" mass="20744">MMGKLIWLMGPSGSGKDSLLAELRLREQTQLLVAHRYITRDASAGSENHIALSEQEFFTRAGQNLLALSWHANGLYYGVGVEIDLWLHAGFDVLVNGSRAHLPQARARYQSALLPICLQVSPEILRQRLENRGRENASEINARLARAARYTPQDCHTLNNDGSLRQSVDTLLTLIHQKEKHHACL</sequence>
<reference key="1">
    <citation type="journal article" date="2001" name="Nature">
        <title>Genome sequence of enterohaemorrhagic Escherichia coli O157:H7.</title>
        <authorList>
            <person name="Perna N.T."/>
            <person name="Plunkett G. III"/>
            <person name="Burland V."/>
            <person name="Mau B."/>
            <person name="Glasner J.D."/>
            <person name="Rose D.J."/>
            <person name="Mayhew G.F."/>
            <person name="Evans P.S."/>
            <person name="Gregor J."/>
            <person name="Kirkpatrick H.A."/>
            <person name="Posfai G."/>
            <person name="Hackett J."/>
            <person name="Klink S."/>
            <person name="Boutin A."/>
            <person name="Shao Y."/>
            <person name="Miller L."/>
            <person name="Grotbeck E.J."/>
            <person name="Davis N.W."/>
            <person name="Lim A."/>
            <person name="Dimalanta E.T."/>
            <person name="Potamousis K."/>
            <person name="Apodaca J."/>
            <person name="Anantharaman T.S."/>
            <person name="Lin J."/>
            <person name="Yen G."/>
            <person name="Schwartz D.C."/>
            <person name="Welch R.A."/>
            <person name="Blattner F.R."/>
        </authorList>
    </citation>
    <scope>NUCLEOTIDE SEQUENCE [LARGE SCALE GENOMIC DNA]</scope>
    <source>
        <strain>O157:H7 / EDL933 / ATCC 700927 / EHEC</strain>
    </source>
</reference>
<reference key="2">
    <citation type="journal article" date="2001" name="DNA Res.">
        <title>Complete genome sequence of enterohemorrhagic Escherichia coli O157:H7 and genomic comparison with a laboratory strain K-12.</title>
        <authorList>
            <person name="Hayashi T."/>
            <person name="Makino K."/>
            <person name="Ohnishi M."/>
            <person name="Kurokawa K."/>
            <person name="Ishii K."/>
            <person name="Yokoyama K."/>
            <person name="Han C.-G."/>
            <person name="Ohtsubo E."/>
            <person name="Nakayama K."/>
            <person name="Murata T."/>
            <person name="Tanaka M."/>
            <person name="Tobe T."/>
            <person name="Iida T."/>
            <person name="Takami H."/>
            <person name="Honda T."/>
            <person name="Sasakawa C."/>
            <person name="Ogasawara N."/>
            <person name="Yasunaga T."/>
            <person name="Kuhara S."/>
            <person name="Shiba T."/>
            <person name="Hattori M."/>
            <person name="Shinagawa H."/>
        </authorList>
    </citation>
    <scope>NUCLEOTIDE SEQUENCE [LARGE SCALE GENOMIC DNA]</scope>
    <source>
        <strain>O157:H7 / Sakai / RIMD 0509952 / EHEC</strain>
    </source>
</reference>
<dbReference type="EC" id="2.7.4.23" evidence="1"/>
<dbReference type="EMBL" id="AE005174">
    <property type="protein sequence ID" value="AAG59294.1"/>
    <property type="molecule type" value="Genomic_DNA"/>
</dbReference>
<dbReference type="EMBL" id="BA000007">
    <property type="protein sequence ID" value="BAB38500.1"/>
    <property type="molecule type" value="Genomic_DNA"/>
</dbReference>
<dbReference type="PIR" id="B86104">
    <property type="entry name" value="B86104"/>
</dbReference>
<dbReference type="PIR" id="E91263">
    <property type="entry name" value="E91263"/>
</dbReference>
<dbReference type="RefSeq" id="NP_313104.1">
    <property type="nucleotide sequence ID" value="NC_002695.1"/>
</dbReference>
<dbReference type="RefSeq" id="WP_000971883.1">
    <property type="nucleotide sequence ID" value="NZ_VOAI01000008.1"/>
</dbReference>
<dbReference type="SMR" id="Q8X5P4"/>
<dbReference type="STRING" id="155864.Z5697"/>
<dbReference type="GeneID" id="914257"/>
<dbReference type="KEGG" id="ece:Z5697"/>
<dbReference type="KEGG" id="ecs:ECs_5077"/>
<dbReference type="PATRIC" id="fig|386585.9.peg.5307"/>
<dbReference type="eggNOG" id="COG3709">
    <property type="taxonomic scope" value="Bacteria"/>
</dbReference>
<dbReference type="HOGENOM" id="CLU_102477_0_0_6"/>
<dbReference type="OMA" id="RLIWLTG"/>
<dbReference type="UniPathway" id="UPA00087">
    <property type="reaction ID" value="UER00175"/>
</dbReference>
<dbReference type="Proteomes" id="UP000000558">
    <property type="component" value="Chromosome"/>
</dbReference>
<dbReference type="Proteomes" id="UP000002519">
    <property type="component" value="Chromosome"/>
</dbReference>
<dbReference type="GO" id="GO:0005524">
    <property type="term" value="F:ATP binding"/>
    <property type="evidence" value="ECO:0007669"/>
    <property type="project" value="UniProtKB-KW"/>
</dbReference>
<dbReference type="GO" id="GO:0033863">
    <property type="term" value="F:ribose 1,5-bisphosphate phosphokinase activity"/>
    <property type="evidence" value="ECO:0007669"/>
    <property type="project" value="UniProtKB-UniRule"/>
</dbReference>
<dbReference type="GO" id="GO:0006015">
    <property type="term" value="P:5-phosphoribose 1-diphosphate biosynthetic process"/>
    <property type="evidence" value="ECO:0007669"/>
    <property type="project" value="UniProtKB-UniRule"/>
</dbReference>
<dbReference type="GO" id="GO:0019634">
    <property type="term" value="P:organic phosphonate metabolic process"/>
    <property type="evidence" value="ECO:0007669"/>
    <property type="project" value="UniProtKB-UniRule"/>
</dbReference>
<dbReference type="FunFam" id="3.40.50.300:FF:000979">
    <property type="entry name" value="Ribose 1,5-bisphosphate phosphokinase PhnN"/>
    <property type="match status" value="1"/>
</dbReference>
<dbReference type="Gene3D" id="3.40.50.300">
    <property type="entry name" value="P-loop containing nucleotide triphosphate hydrolases"/>
    <property type="match status" value="1"/>
</dbReference>
<dbReference type="HAMAP" id="MF_00836">
    <property type="entry name" value="PhnN"/>
    <property type="match status" value="1"/>
</dbReference>
<dbReference type="InterPro" id="IPR008145">
    <property type="entry name" value="GK/Ca_channel_bsu"/>
</dbReference>
<dbReference type="InterPro" id="IPR027417">
    <property type="entry name" value="P-loop_NTPase"/>
</dbReference>
<dbReference type="InterPro" id="IPR012699">
    <property type="entry name" value="PhnN"/>
</dbReference>
<dbReference type="NCBIfam" id="TIGR02322">
    <property type="entry name" value="phosphon_PhnN"/>
    <property type="match status" value="1"/>
</dbReference>
<dbReference type="NCBIfam" id="NF007485">
    <property type="entry name" value="PRK10078.1"/>
    <property type="match status" value="1"/>
</dbReference>
<dbReference type="Pfam" id="PF13238">
    <property type="entry name" value="AAA_18"/>
    <property type="match status" value="1"/>
</dbReference>
<dbReference type="SMART" id="SM00072">
    <property type="entry name" value="GuKc"/>
    <property type="match status" value="1"/>
</dbReference>
<dbReference type="SUPFAM" id="SSF52540">
    <property type="entry name" value="P-loop containing nucleoside triphosphate hydrolases"/>
    <property type="match status" value="1"/>
</dbReference>
<keyword id="KW-0067">ATP-binding</keyword>
<keyword id="KW-0547">Nucleotide-binding</keyword>
<keyword id="KW-1185">Reference proteome</keyword>
<keyword id="KW-0808">Transferase</keyword>